<reference key="1">
    <citation type="journal article" date="1991" name="Gene">
        <title>Isolation and characterization of cDNAs encoding beta A2- and beta A4-crystallins: heterologous interactions in the predicted beta A4-beta B2 heterodimer.</title>
        <authorList>
            <person name="van Rens G.L."/>
            <person name="Driessen H.P.C."/>
            <person name="Nalini V."/>
            <person name="Slingsby C."/>
            <person name="de Jong W.W."/>
            <person name="Bloemendal H."/>
        </authorList>
    </citation>
    <scope>NUCLEOTIDE SEQUENCE [MRNA]</scope>
    <source>
        <tissue>Lens</tissue>
    </source>
</reference>
<reference key="2">
    <citation type="journal article" date="1984" name="Eur. J. Biochem.">
        <title>Homology between the primary structures of the major bovine beta-crystallin chains.</title>
        <authorList>
            <person name="Berbers G.A.M."/>
            <person name="Hoekman W.A."/>
            <person name="Bloemendal H."/>
            <person name="de Jong W.W."/>
            <person name="Kleinschmidt T."/>
            <person name="Braunitzer G."/>
        </authorList>
    </citation>
    <scope>PROTEIN SEQUENCE OF 147-210</scope>
    <source>
        <tissue>Lens cortex</tissue>
    </source>
</reference>
<keyword id="KW-0903">Direct protein sequencing</keyword>
<keyword id="KW-0273">Eye lens protein</keyword>
<keyword id="KW-1185">Reference proteome</keyword>
<keyword id="KW-0677">Repeat</keyword>
<protein>
    <recommendedName>
        <fullName>Beta-crystallin A4</fullName>
    </recommendedName>
    <alternativeName>
        <fullName>Beta-A4 crystallin</fullName>
    </alternativeName>
</protein>
<dbReference type="EMBL" id="M60328">
    <property type="protein sequence ID" value="AAA30403.1"/>
    <property type="molecule type" value="mRNA"/>
</dbReference>
<dbReference type="PIR" id="JH0603">
    <property type="entry name" value="JH0603"/>
</dbReference>
<dbReference type="RefSeq" id="NP_776950.1">
    <property type="nucleotide sequence ID" value="NM_174525.2"/>
</dbReference>
<dbReference type="SMR" id="P11842"/>
<dbReference type="FunCoup" id="P11842">
    <property type="interactions" value="46"/>
</dbReference>
<dbReference type="STRING" id="9913.ENSBTAP00000025674"/>
<dbReference type="PaxDb" id="9913-ENSBTAP00000025674"/>
<dbReference type="GeneID" id="282204"/>
<dbReference type="KEGG" id="bta:282204"/>
<dbReference type="CTD" id="1413"/>
<dbReference type="eggNOG" id="ENOG502QTF8">
    <property type="taxonomic scope" value="Eukaryota"/>
</dbReference>
<dbReference type="HOGENOM" id="CLU_081883_0_0_1"/>
<dbReference type="InParanoid" id="P11842"/>
<dbReference type="OrthoDB" id="8688215at2759"/>
<dbReference type="Proteomes" id="UP000009136">
    <property type="component" value="Unplaced"/>
</dbReference>
<dbReference type="GO" id="GO:0005212">
    <property type="term" value="F:structural constituent of eye lens"/>
    <property type="evidence" value="ECO:0000318"/>
    <property type="project" value="GO_Central"/>
</dbReference>
<dbReference type="GO" id="GO:0002088">
    <property type="term" value="P:lens development in camera-type eye"/>
    <property type="evidence" value="ECO:0000318"/>
    <property type="project" value="GO_Central"/>
</dbReference>
<dbReference type="GO" id="GO:0007601">
    <property type="term" value="P:visual perception"/>
    <property type="evidence" value="ECO:0000318"/>
    <property type="project" value="GO_Central"/>
</dbReference>
<dbReference type="FunFam" id="2.60.20.10:FF:000004">
    <property type="entry name" value="Crystallin beta A4"/>
    <property type="match status" value="1"/>
</dbReference>
<dbReference type="FunFam" id="2.60.20.10:FF:000002">
    <property type="entry name" value="Crystallin, beta B2"/>
    <property type="match status" value="1"/>
</dbReference>
<dbReference type="Gene3D" id="2.60.20.10">
    <property type="entry name" value="Crystallins"/>
    <property type="match status" value="2"/>
</dbReference>
<dbReference type="InterPro" id="IPR050252">
    <property type="entry name" value="Beta/Gamma-Crystallin"/>
</dbReference>
<dbReference type="InterPro" id="IPR001064">
    <property type="entry name" value="Beta/gamma_crystallin"/>
</dbReference>
<dbReference type="InterPro" id="IPR011024">
    <property type="entry name" value="G_crystallin-like"/>
</dbReference>
<dbReference type="PANTHER" id="PTHR11818:SF19">
    <property type="entry name" value="BETA-CRYSTALLIN A4"/>
    <property type="match status" value="1"/>
</dbReference>
<dbReference type="PANTHER" id="PTHR11818">
    <property type="entry name" value="BETA/GAMMA CRYSTALLIN"/>
    <property type="match status" value="1"/>
</dbReference>
<dbReference type="Pfam" id="PF00030">
    <property type="entry name" value="Crystall"/>
    <property type="match status" value="2"/>
</dbReference>
<dbReference type="PRINTS" id="PR01367">
    <property type="entry name" value="BGCRYSTALLIN"/>
</dbReference>
<dbReference type="SMART" id="SM00247">
    <property type="entry name" value="XTALbg"/>
    <property type="match status" value="2"/>
</dbReference>
<dbReference type="SUPFAM" id="SSF49695">
    <property type="entry name" value="gamma-Crystallin-like"/>
    <property type="match status" value="1"/>
</dbReference>
<dbReference type="PROSITE" id="PS50915">
    <property type="entry name" value="CRYSTALLIN_BETA_GAMMA"/>
    <property type="match status" value="4"/>
</dbReference>
<evidence type="ECO:0000250" key="1"/>
<evidence type="ECO:0000255" key="2">
    <source>
        <dbReference type="PROSITE-ProRule" id="PRU00028"/>
    </source>
</evidence>
<evidence type="ECO:0000305" key="3"/>
<proteinExistence type="evidence at protein level"/>
<gene>
    <name type="primary">CRYBA4</name>
</gene>
<accession>P11842</accession>
<comment type="function">
    <text>Crystallins are the dominant structural components of the vertebrate eye lens.</text>
</comment>
<comment type="subunit">
    <text evidence="1">Homo/heterodimer, or complexes of higher-order. The structure of beta-crystallin oligomers seems to be stabilized through interactions between the N-terminal arms (By similarity).</text>
</comment>
<comment type="domain">
    <text>Has a two-domain beta-structure, folded into four very similar Greek key motifs.</text>
</comment>
<comment type="similarity">
    <text evidence="3">Belongs to the beta/gamma-crystallin family.</text>
</comment>
<name>CRBA4_BOVIN</name>
<feature type="chain" id="PRO_0000057544" description="Beta-crystallin A4">
    <location>
        <begin position="1"/>
        <end position="210"/>
    </location>
</feature>
<feature type="domain" description="Beta/gamma crystallin 'Greek key' 1" evidence="2">
    <location>
        <begin position="26"/>
        <end position="65"/>
    </location>
</feature>
<feature type="domain" description="Beta/gamma crystallin 'Greek key' 2" evidence="2">
    <location>
        <begin position="66"/>
        <end position="112"/>
    </location>
</feature>
<feature type="domain" description="Beta/gamma crystallin 'Greek key' 3" evidence="2">
    <location>
        <begin position="119"/>
        <end position="160"/>
    </location>
</feature>
<feature type="domain" description="Beta/gamma crystallin 'Greek key' 4" evidence="2">
    <location>
        <begin position="161"/>
        <end position="209"/>
    </location>
</feature>
<feature type="region of interest" description="N-terminal arm">
    <location>
        <begin position="1"/>
        <end position="25"/>
    </location>
</feature>
<feature type="region of interest" description="Connecting peptide">
    <location>
        <begin position="113"/>
        <end position="118"/>
    </location>
</feature>
<organism>
    <name type="scientific">Bos taurus</name>
    <name type="common">Bovine</name>
    <dbReference type="NCBI Taxonomy" id="9913"/>
    <lineage>
        <taxon>Eukaryota</taxon>
        <taxon>Metazoa</taxon>
        <taxon>Chordata</taxon>
        <taxon>Craniata</taxon>
        <taxon>Vertebrata</taxon>
        <taxon>Euteleostomi</taxon>
        <taxon>Mammalia</taxon>
        <taxon>Eutheria</taxon>
        <taxon>Laurasiatheria</taxon>
        <taxon>Artiodactyla</taxon>
        <taxon>Ruminantia</taxon>
        <taxon>Pecora</taxon>
        <taxon>Bovidae</taxon>
        <taxon>Bovinae</taxon>
        <taxon>Bos</taxon>
    </lineage>
</organism>
<sequence>MSGMFSGSISETSGMSLQCTKSAGHWKIVVWDEEGFQGRRHEFTAECPSVLELGFETVRSLKVLSGAWVGFEHAGFQGQQYVLERGEYPSWDAWSGNTSYPAERLTSFRPVACANHRDSRLTIFEQENFLGRKGELSDDYPSLQAMGWDGNEVGSFHVHSGAWVCSQFPGYRGFQYVLECDHHSGDYKHFREWGSHAQTFQVQSIRRIQQ</sequence>